<sequence length="79" mass="9171">MWIYILVGIICLLAGLAGGFFIARRYMMSYLKNNPPINEQMLQMMMAQMGQKPSQKKINQMMSAMNKQQEKEKPKKAKK</sequence>
<dbReference type="EMBL" id="CP001175">
    <property type="protein sequence ID" value="ACK39611.1"/>
    <property type="molecule type" value="Genomic_DNA"/>
</dbReference>
<dbReference type="RefSeq" id="WP_003723442.1">
    <property type="nucleotide sequence ID" value="NC_011660.1"/>
</dbReference>
<dbReference type="SMR" id="B8DG21"/>
<dbReference type="KEGG" id="lmh:LMHCC_1264"/>
<dbReference type="HOGENOM" id="CLU_180108_0_1_9"/>
<dbReference type="GO" id="GO:0005886">
    <property type="term" value="C:plasma membrane"/>
    <property type="evidence" value="ECO:0007669"/>
    <property type="project" value="UniProtKB-SubCell"/>
</dbReference>
<dbReference type="HAMAP" id="MF_00363">
    <property type="entry name" value="UPF0154"/>
    <property type="match status" value="1"/>
</dbReference>
<dbReference type="InterPro" id="IPR005359">
    <property type="entry name" value="UPF0154"/>
</dbReference>
<dbReference type="NCBIfam" id="NF002503">
    <property type="entry name" value="PRK01844.1"/>
    <property type="match status" value="1"/>
</dbReference>
<dbReference type="Pfam" id="PF03672">
    <property type="entry name" value="UPF0154"/>
    <property type="match status" value="1"/>
</dbReference>
<comment type="subcellular location">
    <subcellularLocation>
        <location evidence="1">Cell membrane</location>
        <topology evidence="1">Single-pass membrane protein</topology>
    </subcellularLocation>
</comment>
<comment type="similarity">
    <text evidence="1">Belongs to the UPF0154 family.</text>
</comment>
<evidence type="ECO:0000255" key="1">
    <source>
        <dbReference type="HAMAP-Rule" id="MF_00363"/>
    </source>
</evidence>
<evidence type="ECO:0000256" key="2">
    <source>
        <dbReference type="SAM" id="MobiDB-lite"/>
    </source>
</evidence>
<accession>B8DG21</accession>
<reference key="1">
    <citation type="journal article" date="2011" name="J. Bacteriol.">
        <title>Genome sequence of lineage III Listeria monocytogenes strain HCC23.</title>
        <authorList>
            <person name="Steele C.L."/>
            <person name="Donaldson J.R."/>
            <person name="Paul D."/>
            <person name="Banes M.M."/>
            <person name="Arick T."/>
            <person name="Bridges S.M."/>
            <person name="Lawrence M.L."/>
        </authorList>
    </citation>
    <scope>NUCLEOTIDE SEQUENCE [LARGE SCALE GENOMIC DNA]</scope>
    <source>
        <strain>HCC23</strain>
    </source>
</reference>
<feature type="chain" id="PRO_1000197727" description="UPF0154 protein LMHCC_1264">
    <location>
        <begin position="1"/>
        <end position="79"/>
    </location>
</feature>
<feature type="transmembrane region" description="Helical" evidence="1">
    <location>
        <begin position="2"/>
        <end position="22"/>
    </location>
</feature>
<feature type="region of interest" description="Disordered" evidence="2">
    <location>
        <begin position="57"/>
        <end position="79"/>
    </location>
</feature>
<feature type="compositionally biased region" description="Polar residues" evidence="2">
    <location>
        <begin position="57"/>
        <end position="66"/>
    </location>
</feature>
<keyword id="KW-1003">Cell membrane</keyword>
<keyword id="KW-0472">Membrane</keyword>
<keyword id="KW-0812">Transmembrane</keyword>
<keyword id="KW-1133">Transmembrane helix</keyword>
<gene>
    <name type="ordered locus">LMHCC_1264</name>
</gene>
<name>Y1264_LISMH</name>
<organism>
    <name type="scientific">Listeria monocytogenes serotype 4a (strain HCC23)</name>
    <dbReference type="NCBI Taxonomy" id="552536"/>
    <lineage>
        <taxon>Bacteria</taxon>
        <taxon>Bacillati</taxon>
        <taxon>Bacillota</taxon>
        <taxon>Bacilli</taxon>
        <taxon>Bacillales</taxon>
        <taxon>Listeriaceae</taxon>
        <taxon>Listeria</taxon>
    </lineage>
</organism>
<protein>
    <recommendedName>
        <fullName evidence="1">UPF0154 protein LMHCC_1264</fullName>
    </recommendedName>
</protein>
<proteinExistence type="inferred from homology"/>